<comment type="function">
    <text>Component of the cornified envelope of keratinocytes. May be involved in the interplay between adherens junctions and desmosomes. The function in the nucleus is not known.</text>
</comment>
<comment type="subcellular location">
    <subcellularLocation>
        <location evidence="6">Cell junction</location>
    </subcellularLocation>
    <subcellularLocation>
        <location evidence="6">Nucleus</location>
    </subcellularLocation>
    <subcellularLocation>
        <location evidence="6">Cytoplasm</location>
        <location evidence="6">Cytoskeleton</location>
    </subcellularLocation>
    <text evidence="6">In an antibody regognizing isoform 2 and isoform 3 has been used.</text>
</comment>
<comment type="alternative products">
    <event type="alternative splicing"/>
    <isoform>
        <id>Q69ZS8-1</id>
        <name>1</name>
        <sequence type="displayed"/>
    </isoform>
    <isoform>
        <id>Q69ZS8-2</id>
        <name>2</name>
        <name>B</name>
        <sequence type="described" ref="VSP_031905 VSP_031906 VSP_031907"/>
    </isoform>
    <isoform>
        <id>Q69ZS8-3</id>
        <name>3</name>
        <name>C</name>
        <sequence type="described" ref="VSP_031904 VSP_031906 VSP_031907"/>
    </isoform>
    <text>Additional isoforms seem to exist.</text>
</comment>
<comment type="tissue specificity">
    <text evidence="5">Expressed in skin interfollicular epidermis and hair follicles. Expressed in tongue epithelium basal suprabasal layers.</text>
</comment>
<comment type="developmental stage">
    <text evidence="6">Expressed in eggs and early embryos. Detected in unfertilized eggs associated with the spindle apparatus and cytoskeletal sheets. As quickly as 5 minutes after egg activation, relocates to a diffuse peri-spindle position, followed 20-30 minutes later by localization to the presumptive cytokinetic ring. Before the blastocyst stage of development, associates with the nuclear matrix in a cell cycle-dependent manner, and also associates with the cytoplasmic actin cytoskeleton. After blastocyst formation, is found associating with cell-cell junctions, the cytoskeleton and nucleus.</text>
</comment>
<comment type="similarity">
    <text evidence="9">Belongs to the kazrin family.</text>
</comment>
<comment type="sequence caution" evidence="9">
    <conflict type="erroneous initiation">
        <sequence resource="EMBL-CDS" id="BAD32368"/>
    </conflict>
    <text>Extended N-terminus.</text>
</comment>
<accession>Q69ZS8</accession>
<accession>A2AC34</accession>
<accession>B1B0N1</accession>
<accession>Q8BIY2</accession>
<accession>Q8R1X4</accession>
<feature type="chain" id="PRO_0000322454" description="Kazrin">
    <location>
        <begin position="1"/>
        <end position="779"/>
    </location>
</feature>
<feature type="domain" description="SAM 1" evidence="3">
    <location>
        <begin position="450"/>
        <end position="515"/>
    </location>
</feature>
<feature type="domain" description="SAM 2" evidence="3">
    <location>
        <begin position="528"/>
        <end position="592"/>
    </location>
</feature>
<feature type="domain" description="SAM 3" evidence="3">
    <location>
        <begin position="616"/>
        <end position="683"/>
    </location>
</feature>
<feature type="region of interest" description="Disordered" evidence="4">
    <location>
        <begin position="295"/>
        <end position="366"/>
    </location>
</feature>
<feature type="region of interest" description="Disordered" evidence="4">
    <location>
        <begin position="403"/>
        <end position="429"/>
    </location>
</feature>
<feature type="region of interest" description="Disordered" evidence="4">
    <location>
        <begin position="685"/>
        <end position="779"/>
    </location>
</feature>
<feature type="coiled-coil region" evidence="2">
    <location>
        <begin position="79"/>
        <end position="261"/>
    </location>
</feature>
<feature type="compositionally biased region" description="Polar residues" evidence="4">
    <location>
        <begin position="415"/>
        <end position="426"/>
    </location>
</feature>
<feature type="compositionally biased region" description="Basic and acidic residues" evidence="4">
    <location>
        <begin position="736"/>
        <end position="746"/>
    </location>
</feature>
<feature type="modified residue" description="Phosphoserine" evidence="10">
    <location>
        <position position="356"/>
    </location>
</feature>
<feature type="modified residue" description="Phosphoserine" evidence="10">
    <location>
        <position position="371"/>
    </location>
</feature>
<feature type="modified residue" description="Phosphoserine" evidence="1">
    <location>
        <position position="391"/>
    </location>
</feature>
<feature type="splice variant" id="VSP_031904" description="In isoform 3." evidence="7">
    <location>
        <begin position="1"/>
        <end position="99"/>
    </location>
</feature>
<feature type="splice variant" id="VSP_031905" description="In isoform 2." evidence="8">
    <original>MMEDNKQLALRIDGAVQSASQEVTNLRAELTATNRRLAELSGGGGGPGSGPGAATSASAAAVTVADSAVATMENHQHGAQ</original>
    <variation>MRAADSGSWERVRQLAAYGQPTPSCGRDTGSARVPEPGACKLCADTTGLREQQGAGAVPDAADGFGIQP</variation>
    <location>
        <begin position="1"/>
        <end position="80"/>
    </location>
</feature>
<feature type="splice variant" id="VSP_031906" description="In isoform 2 and isoform 3." evidence="7 8">
    <original>DSDSQCSPTRHSLS</original>
    <variation>GTAPDYYIEEDADW</variation>
    <location>
        <begin position="412"/>
        <end position="425"/>
    </location>
</feature>
<feature type="splice variant" id="VSP_031907" description="In isoform 2 and isoform 3." evidence="7 8">
    <location>
        <begin position="426"/>
        <end position="779"/>
    </location>
</feature>
<feature type="sequence conflict" description="In Ref. 1; BAC35155." evidence="9" ref="1">
    <original>R</original>
    <variation>Q</variation>
    <location>
        <position position="84"/>
    </location>
</feature>
<gene>
    <name type="primary">Kazn</name>
    <name type="synonym">Kaz</name>
    <name type="synonym">Kiaa1026</name>
</gene>
<name>KAZRN_MOUSE</name>
<reference key="1">
    <citation type="journal article" date="2004" name="DNA Res.">
        <title>Prediction of the coding sequences of mouse homologues of KIAA gene: IV. The complete nucleotide sequences of 500 mouse KIAA-homologous cDNAs identified by screening of terminal sequences of cDNA clones randomly sampled from size-fractionated libraries.</title>
        <authorList>
            <person name="Okazaki N."/>
            <person name="Kikuno R."/>
            <person name="Ohara R."/>
            <person name="Inamoto S."/>
            <person name="Koseki H."/>
            <person name="Hiraoka S."/>
            <person name="Saga Y."/>
            <person name="Seino S."/>
            <person name="Nishimura M."/>
            <person name="Kaisho T."/>
            <person name="Hoshino K."/>
            <person name="Kitamura H."/>
            <person name="Nagase T."/>
            <person name="Ohara O."/>
            <person name="Koga H."/>
        </authorList>
    </citation>
    <scope>NUCLEOTIDE SEQUENCE [LARGE SCALE MRNA] (ISOFORM 1)</scope>
    <source>
        <tissue>Fetal brain</tissue>
    </source>
</reference>
<reference key="2">
    <citation type="journal article" date="2005" name="Science">
        <title>The transcriptional landscape of the mammalian genome.</title>
        <authorList>
            <person name="Carninci P."/>
            <person name="Kasukawa T."/>
            <person name="Katayama S."/>
            <person name="Gough J."/>
            <person name="Frith M.C."/>
            <person name="Maeda N."/>
            <person name="Oyama R."/>
            <person name="Ravasi T."/>
            <person name="Lenhard B."/>
            <person name="Wells C."/>
            <person name="Kodzius R."/>
            <person name="Shimokawa K."/>
            <person name="Bajic V.B."/>
            <person name="Brenner S.E."/>
            <person name="Batalov S."/>
            <person name="Forrest A.R."/>
            <person name="Zavolan M."/>
            <person name="Davis M.J."/>
            <person name="Wilming L.G."/>
            <person name="Aidinis V."/>
            <person name="Allen J.E."/>
            <person name="Ambesi-Impiombato A."/>
            <person name="Apweiler R."/>
            <person name="Aturaliya R.N."/>
            <person name="Bailey T.L."/>
            <person name="Bansal M."/>
            <person name="Baxter L."/>
            <person name="Beisel K.W."/>
            <person name="Bersano T."/>
            <person name="Bono H."/>
            <person name="Chalk A.M."/>
            <person name="Chiu K.P."/>
            <person name="Choudhary V."/>
            <person name="Christoffels A."/>
            <person name="Clutterbuck D.R."/>
            <person name="Crowe M.L."/>
            <person name="Dalla E."/>
            <person name="Dalrymple B.P."/>
            <person name="de Bono B."/>
            <person name="Della Gatta G."/>
            <person name="di Bernardo D."/>
            <person name="Down T."/>
            <person name="Engstrom P."/>
            <person name="Fagiolini M."/>
            <person name="Faulkner G."/>
            <person name="Fletcher C.F."/>
            <person name="Fukushima T."/>
            <person name="Furuno M."/>
            <person name="Futaki S."/>
            <person name="Gariboldi M."/>
            <person name="Georgii-Hemming P."/>
            <person name="Gingeras T.R."/>
            <person name="Gojobori T."/>
            <person name="Green R.E."/>
            <person name="Gustincich S."/>
            <person name="Harbers M."/>
            <person name="Hayashi Y."/>
            <person name="Hensch T.K."/>
            <person name="Hirokawa N."/>
            <person name="Hill D."/>
            <person name="Huminiecki L."/>
            <person name="Iacono M."/>
            <person name="Ikeo K."/>
            <person name="Iwama A."/>
            <person name="Ishikawa T."/>
            <person name="Jakt M."/>
            <person name="Kanapin A."/>
            <person name="Katoh M."/>
            <person name="Kawasawa Y."/>
            <person name="Kelso J."/>
            <person name="Kitamura H."/>
            <person name="Kitano H."/>
            <person name="Kollias G."/>
            <person name="Krishnan S.P."/>
            <person name="Kruger A."/>
            <person name="Kummerfeld S.K."/>
            <person name="Kurochkin I.V."/>
            <person name="Lareau L.F."/>
            <person name="Lazarevic D."/>
            <person name="Lipovich L."/>
            <person name="Liu J."/>
            <person name="Liuni S."/>
            <person name="McWilliam S."/>
            <person name="Madan Babu M."/>
            <person name="Madera M."/>
            <person name="Marchionni L."/>
            <person name="Matsuda H."/>
            <person name="Matsuzawa S."/>
            <person name="Miki H."/>
            <person name="Mignone F."/>
            <person name="Miyake S."/>
            <person name="Morris K."/>
            <person name="Mottagui-Tabar S."/>
            <person name="Mulder N."/>
            <person name="Nakano N."/>
            <person name="Nakauchi H."/>
            <person name="Ng P."/>
            <person name="Nilsson R."/>
            <person name="Nishiguchi S."/>
            <person name="Nishikawa S."/>
            <person name="Nori F."/>
            <person name="Ohara O."/>
            <person name="Okazaki Y."/>
            <person name="Orlando V."/>
            <person name="Pang K.C."/>
            <person name="Pavan W.J."/>
            <person name="Pavesi G."/>
            <person name="Pesole G."/>
            <person name="Petrovsky N."/>
            <person name="Piazza S."/>
            <person name="Reed J."/>
            <person name="Reid J.F."/>
            <person name="Ring B.Z."/>
            <person name="Ringwald M."/>
            <person name="Rost B."/>
            <person name="Ruan Y."/>
            <person name="Salzberg S.L."/>
            <person name="Sandelin A."/>
            <person name="Schneider C."/>
            <person name="Schoenbach C."/>
            <person name="Sekiguchi K."/>
            <person name="Semple C.A."/>
            <person name="Seno S."/>
            <person name="Sessa L."/>
            <person name="Sheng Y."/>
            <person name="Shibata Y."/>
            <person name="Shimada H."/>
            <person name="Shimada K."/>
            <person name="Silva D."/>
            <person name="Sinclair B."/>
            <person name="Sperling S."/>
            <person name="Stupka E."/>
            <person name="Sugiura K."/>
            <person name="Sultana R."/>
            <person name="Takenaka Y."/>
            <person name="Taki K."/>
            <person name="Tammoja K."/>
            <person name="Tan S.L."/>
            <person name="Tang S."/>
            <person name="Taylor M.S."/>
            <person name="Tegner J."/>
            <person name="Teichmann S.A."/>
            <person name="Ueda H.R."/>
            <person name="van Nimwegen E."/>
            <person name="Verardo R."/>
            <person name="Wei C.L."/>
            <person name="Yagi K."/>
            <person name="Yamanishi H."/>
            <person name="Zabarovsky E."/>
            <person name="Zhu S."/>
            <person name="Zimmer A."/>
            <person name="Hide W."/>
            <person name="Bult C."/>
            <person name="Grimmond S.M."/>
            <person name="Teasdale R.D."/>
            <person name="Liu E.T."/>
            <person name="Brusic V."/>
            <person name="Quackenbush J."/>
            <person name="Wahlestedt C."/>
            <person name="Mattick J.S."/>
            <person name="Hume D.A."/>
            <person name="Kai C."/>
            <person name="Sasaki D."/>
            <person name="Tomaru Y."/>
            <person name="Fukuda S."/>
            <person name="Kanamori-Katayama M."/>
            <person name="Suzuki M."/>
            <person name="Aoki J."/>
            <person name="Arakawa T."/>
            <person name="Iida J."/>
            <person name="Imamura K."/>
            <person name="Itoh M."/>
            <person name="Kato T."/>
            <person name="Kawaji H."/>
            <person name="Kawagashira N."/>
            <person name="Kawashima T."/>
            <person name="Kojima M."/>
            <person name="Kondo S."/>
            <person name="Konno H."/>
            <person name="Nakano K."/>
            <person name="Ninomiya N."/>
            <person name="Nishio T."/>
            <person name="Okada M."/>
            <person name="Plessy C."/>
            <person name="Shibata K."/>
            <person name="Shiraki T."/>
            <person name="Suzuki S."/>
            <person name="Tagami M."/>
            <person name="Waki K."/>
            <person name="Watahiki A."/>
            <person name="Okamura-Oho Y."/>
            <person name="Suzuki H."/>
            <person name="Kawai J."/>
            <person name="Hayashizaki Y."/>
        </authorList>
    </citation>
    <scope>NUCLEOTIDE SEQUENCE [LARGE SCALE MRNA] (ISOFORM 2)</scope>
    <source>
        <strain>C57BL/6J</strain>
        <tissue>Mammary gland</tissue>
    </source>
</reference>
<reference key="3">
    <citation type="journal article" date="2009" name="PLoS Biol.">
        <title>Lineage-specific biology revealed by a finished genome assembly of the mouse.</title>
        <authorList>
            <person name="Church D.M."/>
            <person name="Goodstadt L."/>
            <person name="Hillier L.W."/>
            <person name="Zody M.C."/>
            <person name="Goldstein S."/>
            <person name="She X."/>
            <person name="Bult C.J."/>
            <person name="Agarwala R."/>
            <person name="Cherry J.L."/>
            <person name="DiCuccio M."/>
            <person name="Hlavina W."/>
            <person name="Kapustin Y."/>
            <person name="Meric P."/>
            <person name="Maglott D."/>
            <person name="Birtle Z."/>
            <person name="Marques A.C."/>
            <person name="Graves T."/>
            <person name="Zhou S."/>
            <person name="Teague B."/>
            <person name="Potamousis K."/>
            <person name="Churas C."/>
            <person name="Place M."/>
            <person name="Herschleb J."/>
            <person name="Runnheim R."/>
            <person name="Forrest D."/>
            <person name="Amos-Landgraf J."/>
            <person name="Schwartz D.C."/>
            <person name="Cheng Z."/>
            <person name="Lindblad-Toh K."/>
            <person name="Eichler E.E."/>
            <person name="Ponting C.P."/>
        </authorList>
    </citation>
    <scope>NUCLEOTIDE SEQUENCE [LARGE SCALE GENOMIC DNA]</scope>
    <source>
        <strain>C57BL/6J</strain>
    </source>
</reference>
<reference key="4">
    <citation type="journal article" date="2004" name="Genome Res.">
        <title>The status, quality, and expansion of the NIH full-length cDNA project: the Mammalian Gene Collection (MGC).</title>
        <authorList>
            <consortium name="The MGC Project Team"/>
        </authorList>
    </citation>
    <scope>NUCLEOTIDE SEQUENCE [LARGE SCALE MRNA] (ISOFORM 3)</scope>
    <source>
        <tissue>Mammary tumor</tissue>
    </source>
</reference>
<reference key="5">
    <citation type="journal article" date="2004" name="J. Cell Biol.">
        <title>Kazrin, a novel periplakin-interacting protein associated with desmosomes and the keratinocyte plasma membrane.</title>
        <authorList>
            <person name="Groot K.R."/>
            <person name="Sevilla L.M."/>
            <person name="Nishi K."/>
            <person name="DiColandrea T."/>
            <person name="Watt F.M."/>
        </authorList>
    </citation>
    <scope>TISSUE SPECIFICITY</scope>
</reference>
<reference key="6">
    <citation type="journal article" date="2005" name="Dev. Dyn.">
        <title>Dynamics and unexpected localization of the plakin binding protein, kazrin, in mouse eggs and early embryos.</title>
        <authorList>
            <person name="Gallicano G.I."/>
            <person name="Foshay K."/>
            <person name="Pengetnze Y."/>
            <person name="Zhou X."/>
        </authorList>
    </citation>
    <scope>SUBCELLULAR LOCATION</scope>
    <scope>DEVELOPMENTAL STAGE</scope>
</reference>
<reference key="7">
    <citation type="journal article" date="2010" name="Cell">
        <title>A tissue-specific atlas of mouse protein phosphorylation and expression.</title>
        <authorList>
            <person name="Huttlin E.L."/>
            <person name="Jedrychowski M.P."/>
            <person name="Elias J.E."/>
            <person name="Goswami T."/>
            <person name="Rad R."/>
            <person name="Beausoleil S.A."/>
            <person name="Villen J."/>
            <person name="Haas W."/>
            <person name="Sowa M.E."/>
            <person name="Gygi S.P."/>
        </authorList>
    </citation>
    <scope>PHOSPHORYLATION [LARGE SCALE ANALYSIS] AT SER-356 AND SER-371</scope>
    <scope>IDENTIFICATION BY MASS SPECTROMETRY [LARGE SCALE ANALYSIS]</scope>
    <source>
        <tissue>Brain</tissue>
        <tissue>Kidney</tissue>
        <tissue>Pancreas</tissue>
    </source>
</reference>
<protein>
    <recommendedName>
        <fullName>Kazrin</fullName>
    </recommendedName>
</protein>
<proteinExistence type="evidence at protein level"/>
<evidence type="ECO:0000250" key="1">
    <source>
        <dbReference type="UniProtKB" id="Q674X7"/>
    </source>
</evidence>
<evidence type="ECO:0000255" key="2"/>
<evidence type="ECO:0000255" key="3">
    <source>
        <dbReference type="PROSITE-ProRule" id="PRU00184"/>
    </source>
</evidence>
<evidence type="ECO:0000256" key="4">
    <source>
        <dbReference type="SAM" id="MobiDB-lite"/>
    </source>
</evidence>
<evidence type="ECO:0000269" key="5">
    <source>
    </source>
</evidence>
<evidence type="ECO:0000269" key="6">
    <source>
    </source>
</evidence>
<evidence type="ECO:0000303" key="7">
    <source>
    </source>
</evidence>
<evidence type="ECO:0000303" key="8">
    <source>
    </source>
</evidence>
<evidence type="ECO:0000305" key="9"/>
<evidence type="ECO:0007744" key="10">
    <source>
    </source>
</evidence>
<keyword id="KW-0025">Alternative splicing</keyword>
<keyword id="KW-0965">Cell junction</keyword>
<keyword id="KW-0175">Coiled coil</keyword>
<keyword id="KW-0963">Cytoplasm</keyword>
<keyword id="KW-0206">Cytoskeleton</keyword>
<keyword id="KW-0417">Keratinization</keyword>
<keyword id="KW-0539">Nucleus</keyword>
<keyword id="KW-0597">Phosphoprotein</keyword>
<keyword id="KW-1185">Reference proteome</keyword>
<keyword id="KW-0677">Repeat</keyword>
<dbReference type="EMBL" id="AK173090">
    <property type="protein sequence ID" value="BAD32368.1"/>
    <property type="status" value="ALT_INIT"/>
    <property type="molecule type" value="mRNA"/>
</dbReference>
<dbReference type="EMBL" id="AK052809">
    <property type="protein sequence ID" value="BAC35155.1"/>
    <property type="molecule type" value="mRNA"/>
</dbReference>
<dbReference type="EMBL" id="AL663037">
    <property type="status" value="NOT_ANNOTATED_CDS"/>
    <property type="molecule type" value="Genomic_DNA"/>
</dbReference>
<dbReference type="EMBL" id="BX537122">
    <property type="status" value="NOT_ANNOTATED_CDS"/>
    <property type="molecule type" value="Genomic_DNA"/>
</dbReference>
<dbReference type="EMBL" id="BC022941">
    <property type="protein sequence ID" value="AAH22941.1"/>
    <property type="molecule type" value="mRNA"/>
</dbReference>
<dbReference type="CCDS" id="CCDS51350.1">
    <molecule id="Q69ZS8-2"/>
</dbReference>
<dbReference type="RefSeq" id="NP_001103154.1">
    <property type="nucleotide sequence ID" value="NM_001109684.1"/>
</dbReference>
<dbReference type="RefSeq" id="NP_001103155.1">
    <molecule id="Q69ZS8-2"/>
    <property type="nucleotide sequence ID" value="NM_001109685.2"/>
</dbReference>
<dbReference type="RefSeq" id="NP_653114.3">
    <molecule id="Q69ZS8-1"/>
    <property type="nucleotide sequence ID" value="NM_144531.3"/>
</dbReference>
<dbReference type="RefSeq" id="XP_036020335.1">
    <molecule id="Q69ZS8-1"/>
    <property type="nucleotide sequence ID" value="XM_036164442.1"/>
</dbReference>
<dbReference type="RefSeq" id="XP_036020336.1">
    <molecule id="Q69ZS8-1"/>
    <property type="nucleotide sequence ID" value="XM_036164443.1"/>
</dbReference>
<dbReference type="SMR" id="Q69ZS8"/>
<dbReference type="BioGRID" id="214763">
    <property type="interactions" value="4"/>
</dbReference>
<dbReference type="FunCoup" id="Q69ZS8">
    <property type="interactions" value="1270"/>
</dbReference>
<dbReference type="STRING" id="10090.ENSMUSP00000038835"/>
<dbReference type="GlyGen" id="Q69ZS8">
    <property type="glycosylation" value="2 sites, 1 O-linked glycan (1 site)"/>
</dbReference>
<dbReference type="iPTMnet" id="Q69ZS8"/>
<dbReference type="PhosphoSitePlus" id="Q69ZS8"/>
<dbReference type="PaxDb" id="10090-ENSMUSP00000038835"/>
<dbReference type="ProteomicsDB" id="301746">
    <molecule id="Q69ZS8-1"/>
</dbReference>
<dbReference type="ProteomicsDB" id="301747">
    <molecule id="Q69ZS8-2"/>
</dbReference>
<dbReference type="ProteomicsDB" id="301748">
    <molecule id="Q69ZS8-3"/>
</dbReference>
<dbReference type="Antibodypedia" id="28740">
    <property type="antibodies" value="103 antibodies from 20 providers"/>
</dbReference>
<dbReference type="DNASU" id="71529"/>
<dbReference type="Ensembl" id="ENSMUST00000036476.10">
    <molecule id="Q69ZS8-2"/>
    <property type="protein sequence ID" value="ENSMUSP00000038835.4"/>
    <property type="gene ID" value="ENSMUSG00000040606.15"/>
</dbReference>
<dbReference type="Ensembl" id="ENSMUST00000155023.9">
    <molecule id="Q69ZS8-1"/>
    <property type="protein sequence ID" value="ENSMUSP00000116071.3"/>
    <property type="gene ID" value="ENSMUSG00000040606.15"/>
</dbReference>
<dbReference type="GeneID" id="71529"/>
<dbReference type="KEGG" id="mmu:71529"/>
<dbReference type="UCSC" id="uc008vpv.2">
    <molecule id="Q69ZS8-1"/>
    <property type="organism name" value="mouse"/>
</dbReference>
<dbReference type="UCSC" id="uc008vpx.2">
    <molecule id="Q69ZS8-2"/>
    <property type="organism name" value="mouse"/>
</dbReference>
<dbReference type="AGR" id="MGI:1918779"/>
<dbReference type="CTD" id="23254"/>
<dbReference type="MGI" id="MGI:1918779">
    <property type="gene designation" value="Kazn"/>
</dbReference>
<dbReference type="VEuPathDB" id="HostDB:ENSMUSG00000040606"/>
<dbReference type="eggNOG" id="KOG0249">
    <property type="taxonomic scope" value="Eukaryota"/>
</dbReference>
<dbReference type="GeneTree" id="ENSGT00940000154570"/>
<dbReference type="InParanoid" id="Q69ZS8"/>
<dbReference type="OMA" id="RVQCEHQ"/>
<dbReference type="OrthoDB" id="6430345at2759"/>
<dbReference type="PhylomeDB" id="Q69ZS8"/>
<dbReference type="TreeFam" id="TF331216"/>
<dbReference type="Reactome" id="R-MMU-6809371">
    <property type="pathway name" value="Formation of the cornified envelope"/>
</dbReference>
<dbReference type="BioGRID-ORCS" id="71529">
    <property type="hits" value="5 hits in 42 CRISPR screens"/>
</dbReference>
<dbReference type="ChiTaRS" id="Kazn">
    <property type="organism name" value="mouse"/>
</dbReference>
<dbReference type="PRO" id="PR:Q69ZS8"/>
<dbReference type="Proteomes" id="UP000000589">
    <property type="component" value="Chromosome 4"/>
</dbReference>
<dbReference type="RNAct" id="Q69ZS8">
    <property type="molecule type" value="protein"/>
</dbReference>
<dbReference type="Bgee" id="ENSMUSG00000040606">
    <property type="expression patterns" value="Expressed in striatum and 69 other cell types or tissues"/>
</dbReference>
<dbReference type="ExpressionAtlas" id="Q69ZS8">
    <property type="expression patterns" value="baseline and differential"/>
</dbReference>
<dbReference type="GO" id="GO:0001533">
    <property type="term" value="C:cornified envelope"/>
    <property type="evidence" value="ECO:0000266"/>
    <property type="project" value="MGI"/>
</dbReference>
<dbReference type="GO" id="GO:0005856">
    <property type="term" value="C:cytoskeleton"/>
    <property type="evidence" value="ECO:0007669"/>
    <property type="project" value="UniProtKB-SubCell"/>
</dbReference>
<dbReference type="GO" id="GO:0005829">
    <property type="term" value="C:cytosol"/>
    <property type="evidence" value="ECO:0007669"/>
    <property type="project" value="Ensembl"/>
</dbReference>
<dbReference type="GO" id="GO:0030057">
    <property type="term" value="C:desmosome"/>
    <property type="evidence" value="ECO:0000266"/>
    <property type="project" value="MGI"/>
</dbReference>
<dbReference type="GO" id="GO:0016607">
    <property type="term" value="C:nuclear speck"/>
    <property type="evidence" value="ECO:0007669"/>
    <property type="project" value="Ensembl"/>
</dbReference>
<dbReference type="GO" id="GO:0031424">
    <property type="term" value="P:keratinization"/>
    <property type="evidence" value="ECO:0007669"/>
    <property type="project" value="UniProtKB-KW"/>
</dbReference>
<dbReference type="CDD" id="cd09564">
    <property type="entry name" value="SAM_kazrin_repeat1"/>
    <property type="match status" value="1"/>
</dbReference>
<dbReference type="CDD" id="cd09567">
    <property type="entry name" value="SAM_kazrin_repeat2"/>
    <property type="match status" value="1"/>
</dbReference>
<dbReference type="CDD" id="cd09570">
    <property type="entry name" value="SAM_kazrin_repeat3"/>
    <property type="match status" value="1"/>
</dbReference>
<dbReference type="FunFam" id="1.10.150.50:FF:000048">
    <property type="entry name" value="kazrin isoform X1"/>
    <property type="match status" value="1"/>
</dbReference>
<dbReference type="FunFam" id="1.10.150.50:FF:000005">
    <property type="entry name" value="Liprin-beta-1 isoform 1"/>
    <property type="match status" value="1"/>
</dbReference>
<dbReference type="FunFam" id="1.10.150.50:FF:000007">
    <property type="entry name" value="Liprin-beta-1 isoform 1"/>
    <property type="match status" value="1"/>
</dbReference>
<dbReference type="Gene3D" id="1.10.150.50">
    <property type="entry name" value="Transcription Factor, Ets-1"/>
    <property type="match status" value="3"/>
</dbReference>
<dbReference type="InterPro" id="IPR037614">
    <property type="entry name" value="Kazrin"/>
</dbReference>
<dbReference type="InterPro" id="IPR037613">
    <property type="entry name" value="Kazrin_SAM_rpt_1"/>
</dbReference>
<dbReference type="InterPro" id="IPR037615">
    <property type="entry name" value="Kazrin_SAM_rpt_2"/>
</dbReference>
<dbReference type="InterPro" id="IPR037616">
    <property type="entry name" value="Kazrin_SAM_rpt_3"/>
</dbReference>
<dbReference type="InterPro" id="IPR001660">
    <property type="entry name" value="SAM"/>
</dbReference>
<dbReference type="InterPro" id="IPR013761">
    <property type="entry name" value="SAM/pointed_sf"/>
</dbReference>
<dbReference type="PANTHER" id="PTHR12776:SF1">
    <property type="entry name" value="KAZRIN"/>
    <property type="match status" value="1"/>
</dbReference>
<dbReference type="PANTHER" id="PTHR12776">
    <property type="entry name" value="KAZRIN-RELATED"/>
    <property type="match status" value="1"/>
</dbReference>
<dbReference type="Pfam" id="PF00536">
    <property type="entry name" value="SAM_1"/>
    <property type="match status" value="2"/>
</dbReference>
<dbReference type="Pfam" id="PF07647">
    <property type="entry name" value="SAM_2"/>
    <property type="match status" value="1"/>
</dbReference>
<dbReference type="SMART" id="SM00454">
    <property type="entry name" value="SAM"/>
    <property type="match status" value="3"/>
</dbReference>
<dbReference type="SUPFAM" id="SSF47769">
    <property type="entry name" value="SAM/Pointed domain"/>
    <property type="match status" value="3"/>
</dbReference>
<dbReference type="PROSITE" id="PS50105">
    <property type="entry name" value="SAM_DOMAIN"/>
    <property type="match status" value="3"/>
</dbReference>
<organism>
    <name type="scientific">Mus musculus</name>
    <name type="common">Mouse</name>
    <dbReference type="NCBI Taxonomy" id="10090"/>
    <lineage>
        <taxon>Eukaryota</taxon>
        <taxon>Metazoa</taxon>
        <taxon>Chordata</taxon>
        <taxon>Craniata</taxon>
        <taxon>Vertebrata</taxon>
        <taxon>Euteleostomi</taxon>
        <taxon>Mammalia</taxon>
        <taxon>Eutheria</taxon>
        <taxon>Euarchontoglires</taxon>
        <taxon>Glires</taxon>
        <taxon>Rodentia</taxon>
        <taxon>Myomorpha</taxon>
        <taxon>Muroidea</taxon>
        <taxon>Muridae</taxon>
        <taxon>Murinae</taxon>
        <taxon>Mus</taxon>
        <taxon>Mus</taxon>
    </lineage>
</organism>
<sequence length="779" mass="86717">MMEDNKQLALRIDGAVQSASQEVTNLRAELTATNRRLAELSGGGGGPGSGPGAATSASAAAVTVADSAVATMENHQHGAQVLLREEVVQLQEEVHLLRQMKEMLAKDLEESQGGKCSEVLSATELRVQLVQKEQELARAKEALQAMKADRKRLKGEKTDLVSQMQQLYATLESREEQLRDFIRNYEQHRKESEDAVKALAKEKDLLEREKWELRRQAKEATDHAAALRSQLDLKDNRMKELEAELAMAKQSLATLTKDVPKRHSLAMPGETVLNGNQEWVVQADLPLTAAIRQSQQTLYHSHPPHPADRQVRVSPCHSRQPSVISDASAAEGDRSSTPSDINSPRHRTHSLCNGDSPGPVQKSLHNPIVQSLEDLEDQKRKKKKEKMGFGSISRVFARGKQRKSLDPGLFDDSDSQCSPTRHSLSLSEGEEQMDRLQHVELVRTTPMSHWKAGTVQAWLEVVMAMPMYVKACAENVKSGKVLLSLSDEDLELGLGVCSSLHRRKLRLAIEDYRDAEAGRSLSKAADLDHHWVAKAWLNDIGLSQYSQAFQNHLVDGRMLNSLMKRDLEKHLNVSKKFHQVSILLGIELLYQVNFSREALQERRARCETQNTDPVVWTNQRVLKWVRDIDLKEYADNLTNSGVHGAVLVLEPTFNAEAMATALGIPSGKHILRRHLAEEMSTIFHPSNSTGIRESERFGTPPGRASSITRAGREDSGGNSKHRAGRLPLGKIGRGFSSKEPDFHDDYGSLENEDCGDEDLQGRPEQCRLEGYGSLEVTNV</sequence>